<dbReference type="EC" id="2.3.1.274" evidence="1"/>
<dbReference type="EMBL" id="CP000046">
    <property type="protein sequence ID" value="AAW38077.1"/>
    <property type="molecule type" value="Genomic_DNA"/>
</dbReference>
<dbReference type="RefSeq" id="WP_000239744.1">
    <property type="nucleotide sequence ID" value="NZ_JBGOFO010000002.1"/>
</dbReference>
<dbReference type="SMR" id="Q5HGK4"/>
<dbReference type="KEGG" id="sac:SACOL1243"/>
<dbReference type="HOGENOM" id="CLU_039379_1_1_9"/>
<dbReference type="UniPathway" id="UPA00085"/>
<dbReference type="Proteomes" id="UP000000530">
    <property type="component" value="Chromosome"/>
</dbReference>
<dbReference type="GO" id="GO:0005737">
    <property type="term" value="C:cytoplasm"/>
    <property type="evidence" value="ECO:0007669"/>
    <property type="project" value="UniProtKB-SubCell"/>
</dbReference>
<dbReference type="GO" id="GO:0043811">
    <property type="term" value="F:phosphate:acyl-[acyl carrier protein] acyltransferase activity"/>
    <property type="evidence" value="ECO:0007669"/>
    <property type="project" value="UniProtKB-UniRule"/>
</dbReference>
<dbReference type="GO" id="GO:0006633">
    <property type="term" value="P:fatty acid biosynthetic process"/>
    <property type="evidence" value="ECO:0007669"/>
    <property type="project" value="UniProtKB-UniRule"/>
</dbReference>
<dbReference type="GO" id="GO:0008654">
    <property type="term" value="P:phospholipid biosynthetic process"/>
    <property type="evidence" value="ECO:0007669"/>
    <property type="project" value="UniProtKB-KW"/>
</dbReference>
<dbReference type="Gene3D" id="3.40.718.10">
    <property type="entry name" value="Isopropylmalate Dehydrogenase"/>
    <property type="match status" value="1"/>
</dbReference>
<dbReference type="HAMAP" id="MF_00019">
    <property type="entry name" value="PlsX"/>
    <property type="match status" value="1"/>
</dbReference>
<dbReference type="InterPro" id="IPR003664">
    <property type="entry name" value="FA_synthesis"/>
</dbReference>
<dbReference type="InterPro" id="IPR012281">
    <property type="entry name" value="Phospholipid_synth_PlsX-like"/>
</dbReference>
<dbReference type="NCBIfam" id="TIGR00182">
    <property type="entry name" value="plsX"/>
    <property type="match status" value="1"/>
</dbReference>
<dbReference type="PANTHER" id="PTHR30100">
    <property type="entry name" value="FATTY ACID/PHOSPHOLIPID SYNTHESIS PROTEIN PLSX"/>
    <property type="match status" value="1"/>
</dbReference>
<dbReference type="PANTHER" id="PTHR30100:SF1">
    <property type="entry name" value="PHOSPHATE ACYLTRANSFERASE"/>
    <property type="match status" value="1"/>
</dbReference>
<dbReference type="Pfam" id="PF02504">
    <property type="entry name" value="FA_synthesis"/>
    <property type="match status" value="1"/>
</dbReference>
<dbReference type="PIRSF" id="PIRSF002465">
    <property type="entry name" value="Phsphlp_syn_PlsX"/>
    <property type="match status" value="1"/>
</dbReference>
<dbReference type="SUPFAM" id="SSF53659">
    <property type="entry name" value="Isocitrate/Isopropylmalate dehydrogenase-like"/>
    <property type="match status" value="1"/>
</dbReference>
<comment type="function">
    <text evidence="1">Catalyzes the reversible formation of acyl-phosphate (acyl-PO(4)) from acyl-[acyl-carrier-protein] (acyl-ACP). This enzyme utilizes acyl-ACP as fatty acyl donor, but not acyl-CoA.</text>
</comment>
<comment type="catalytic activity">
    <reaction evidence="1">
        <text>a fatty acyl-[ACP] + phosphate = an acyl phosphate + holo-[ACP]</text>
        <dbReference type="Rhea" id="RHEA:42292"/>
        <dbReference type="Rhea" id="RHEA-COMP:9685"/>
        <dbReference type="Rhea" id="RHEA-COMP:14125"/>
        <dbReference type="ChEBI" id="CHEBI:43474"/>
        <dbReference type="ChEBI" id="CHEBI:59918"/>
        <dbReference type="ChEBI" id="CHEBI:64479"/>
        <dbReference type="ChEBI" id="CHEBI:138651"/>
        <dbReference type="EC" id="2.3.1.274"/>
    </reaction>
</comment>
<comment type="pathway">
    <text evidence="1">Lipid metabolism; phospholipid metabolism.</text>
</comment>
<comment type="subunit">
    <text evidence="1">Homodimer. Probably interacts with PlsY.</text>
</comment>
<comment type="subcellular location">
    <subcellularLocation>
        <location evidence="1">Cytoplasm</location>
    </subcellularLocation>
    <text evidence="1">Associated with the membrane possibly through PlsY.</text>
</comment>
<comment type="similarity">
    <text evidence="1">Belongs to the PlsX family.</text>
</comment>
<feature type="chain" id="PRO_0000189935" description="Phosphate acyltransferase">
    <location>
        <begin position="1"/>
        <end position="328"/>
    </location>
</feature>
<keyword id="KW-0963">Cytoplasm</keyword>
<keyword id="KW-0444">Lipid biosynthesis</keyword>
<keyword id="KW-0443">Lipid metabolism</keyword>
<keyword id="KW-0594">Phospholipid biosynthesis</keyword>
<keyword id="KW-1208">Phospholipid metabolism</keyword>
<keyword id="KW-0808">Transferase</keyword>
<protein>
    <recommendedName>
        <fullName evidence="1">Phosphate acyltransferase</fullName>
        <ecNumber evidence="1">2.3.1.274</ecNumber>
    </recommendedName>
    <alternativeName>
        <fullName evidence="1">Acyl-ACP phosphotransacylase</fullName>
    </alternativeName>
    <alternativeName>
        <fullName evidence="1">Acyl-[acyl-carrier-protein]--phosphate acyltransferase</fullName>
    </alternativeName>
    <alternativeName>
        <fullName evidence="1">Phosphate-acyl-ACP acyltransferase</fullName>
    </alternativeName>
</protein>
<gene>
    <name evidence="1" type="primary">plsX</name>
    <name type="ordered locus">SACOL1243</name>
</gene>
<organism>
    <name type="scientific">Staphylococcus aureus (strain COL)</name>
    <dbReference type="NCBI Taxonomy" id="93062"/>
    <lineage>
        <taxon>Bacteria</taxon>
        <taxon>Bacillati</taxon>
        <taxon>Bacillota</taxon>
        <taxon>Bacilli</taxon>
        <taxon>Bacillales</taxon>
        <taxon>Staphylococcaceae</taxon>
        <taxon>Staphylococcus</taxon>
    </lineage>
</organism>
<accession>Q5HGK4</accession>
<sequence length="328" mass="35431">MVKLAIDMMGGDNAPDIVLEAVQKAVEDFKDLEIILFGDEKKYNLNHERIEFRHCSEKIEMEDEPVRAIKRKKDSSMVKMAEAVKSGEADGCVSAGNTGALMSAGLFIVGRIKGVARPALVVTLPTIDGKGFVFLDVGANADAKPEHLLQYAQLGDIYAQKIRGIDNPKISLLNIGTEPAKGNSLTKKSYELLNHDHSLNFVGNIEAKTLMDGDTDVVVTDGYTGNMVLKNLEGTAKSIGKMLKDTIMSSTKNKLAGAILKKDLAEFAKKMDYSEYGGSVLLGLEGTVVKAHGSSNAKAFYSAIRQAKIAGEQNIVQTMKETVGESNE</sequence>
<proteinExistence type="inferred from homology"/>
<reference key="1">
    <citation type="journal article" date="2005" name="J. Bacteriol.">
        <title>Insights on evolution of virulence and resistance from the complete genome analysis of an early methicillin-resistant Staphylococcus aureus strain and a biofilm-producing methicillin-resistant Staphylococcus epidermidis strain.</title>
        <authorList>
            <person name="Gill S.R."/>
            <person name="Fouts D.E."/>
            <person name="Archer G.L."/>
            <person name="Mongodin E.F."/>
            <person name="DeBoy R.T."/>
            <person name="Ravel J."/>
            <person name="Paulsen I.T."/>
            <person name="Kolonay J.F."/>
            <person name="Brinkac L.M."/>
            <person name="Beanan M.J."/>
            <person name="Dodson R.J."/>
            <person name="Daugherty S.C."/>
            <person name="Madupu R."/>
            <person name="Angiuoli S.V."/>
            <person name="Durkin A.S."/>
            <person name="Haft D.H."/>
            <person name="Vamathevan J.J."/>
            <person name="Khouri H."/>
            <person name="Utterback T.R."/>
            <person name="Lee C."/>
            <person name="Dimitrov G."/>
            <person name="Jiang L."/>
            <person name="Qin H."/>
            <person name="Weidman J."/>
            <person name="Tran K."/>
            <person name="Kang K.H."/>
            <person name="Hance I.R."/>
            <person name="Nelson K.E."/>
            <person name="Fraser C.M."/>
        </authorList>
    </citation>
    <scope>NUCLEOTIDE SEQUENCE [LARGE SCALE GENOMIC DNA]</scope>
    <source>
        <strain>COL</strain>
    </source>
</reference>
<name>PLSX_STAAC</name>
<evidence type="ECO:0000255" key="1">
    <source>
        <dbReference type="HAMAP-Rule" id="MF_00019"/>
    </source>
</evidence>